<organism>
    <name type="scientific">Burkholderia pseudomallei (strain 1106a)</name>
    <dbReference type="NCBI Taxonomy" id="357348"/>
    <lineage>
        <taxon>Bacteria</taxon>
        <taxon>Pseudomonadati</taxon>
        <taxon>Pseudomonadota</taxon>
        <taxon>Betaproteobacteria</taxon>
        <taxon>Burkholderiales</taxon>
        <taxon>Burkholderiaceae</taxon>
        <taxon>Burkholderia</taxon>
        <taxon>pseudomallei group</taxon>
    </lineage>
</organism>
<comment type="function">
    <text evidence="1">Cell wall formation.</text>
</comment>
<comment type="catalytic activity">
    <reaction evidence="1">
        <text>UDP-N-acetyl-alpha-D-muramate + NADP(+) = UDP-N-acetyl-3-O-(1-carboxyvinyl)-alpha-D-glucosamine + NADPH + H(+)</text>
        <dbReference type="Rhea" id="RHEA:12248"/>
        <dbReference type="ChEBI" id="CHEBI:15378"/>
        <dbReference type="ChEBI" id="CHEBI:57783"/>
        <dbReference type="ChEBI" id="CHEBI:58349"/>
        <dbReference type="ChEBI" id="CHEBI:68483"/>
        <dbReference type="ChEBI" id="CHEBI:70757"/>
        <dbReference type="EC" id="1.3.1.98"/>
    </reaction>
</comment>
<comment type="cofactor">
    <cofactor evidence="1">
        <name>FAD</name>
        <dbReference type="ChEBI" id="CHEBI:57692"/>
    </cofactor>
</comment>
<comment type="pathway">
    <text evidence="1">Cell wall biogenesis; peptidoglycan biosynthesis.</text>
</comment>
<comment type="subcellular location">
    <subcellularLocation>
        <location evidence="1">Cytoplasm</location>
    </subcellularLocation>
</comment>
<comment type="similarity">
    <text evidence="1">Belongs to the MurB family.</text>
</comment>
<keyword id="KW-0131">Cell cycle</keyword>
<keyword id="KW-0132">Cell division</keyword>
<keyword id="KW-0133">Cell shape</keyword>
<keyword id="KW-0961">Cell wall biogenesis/degradation</keyword>
<keyword id="KW-0963">Cytoplasm</keyword>
<keyword id="KW-0274">FAD</keyword>
<keyword id="KW-0285">Flavoprotein</keyword>
<keyword id="KW-0521">NADP</keyword>
<keyword id="KW-0560">Oxidoreductase</keyword>
<keyword id="KW-0573">Peptidoglycan synthesis</keyword>
<gene>
    <name evidence="1" type="primary">murB</name>
    <name type="ordered locus">BURPS1106A_0920</name>
</gene>
<accession>A3NS80</accession>
<sequence length="347" mass="37318">MSRPDSAVSLLPDYSLRAHNTFGFDARARVAARIGSPGQFASLARDPRVAGLDRLVLGGGSNVVFTRDFDGLVLLDEIRGRALVREDDGAWYVEAGGGENWHAFVEWTLAEGMPGLENLALIPGTVGAAPIQNIGAYGLEMKEHFASLRAVDLATGELVEFDAARCAFGYRDSFFKRDGRGRFAIVAVTFRLPKAWTPRIGYADVARELAARGIDARAARARDVFDAVVAIRRAKLPDPLALGNAGSFFKNPVIDAQAFAALRAREPDIVSYPQPDGRVKLAAGWLIDRCGWKGRALGAAAVHERQALVLVNLGGASGADVLALAHAIRRDVLGRFGVELEMEPVCL</sequence>
<feature type="chain" id="PRO_1000002874" description="UDP-N-acetylenolpyruvoylglucosamine reductase">
    <location>
        <begin position="1"/>
        <end position="347"/>
    </location>
</feature>
<feature type="domain" description="FAD-binding PCMH-type" evidence="1">
    <location>
        <begin position="24"/>
        <end position="195"/>
    </location>
</feature>
<feature type="active site" evidence="1">
    <location>
        <position position="171"/>
    </location>
</feature>
<feature type="active site" description="Proton donor" evidence="1">
    <location>
        <position position="247"/>
    </location>
</feature>
<feature type="active site" evidence="1">
    <location>
        <position position="343"/>
    </location>
</feature>
<protein>
    <recommendedName>
        <fullName evidence="1">UDP-N-acetylenolpyruvoylglucosamine reductase</fullName>
        <ecNumber evidence="1">1.3.1.98</ecNumber>
    </recommendedName>
    <alternativeName>
        <fullName evidence="1">UDP-N-acetylmuramate dehydrogenase</fullName>
    </alternativeName>
</protein>
<name>MURB_BURP0</name>
<reference key="1">
    <citation type="journal article" date="2010" name="Genome Biol. Evol.">
        <title>Continuing evolution of Burkholderia mallei through genome reduction and large-scale rearrangements.</title>
        <authorList>
            <person name="Losada L."/>
            <person name="Ronning C.M."/>
            <person name="DeShazer D."/>
            <person name="Woods D."/>
            <person name="Fedorova N."/>
            <person name="Kim H.S."/>
            <person name="Shabalina S.A."/>
            <person name="Pearson T.R."/>
            <person name="Brinkac L."/>
            <person name="Tan P."/>
            <person name="Nandi T."/>
            <person name="Crabtree J."/>
            <person name="Badger J."/>
            <person name="Beckstrom-Sternberg S."/>
            <person name="Saqib M."/>
            <person name="Schutzer S.E."/>
            <person name="Keim P."/>
            <person name="Nierman W.C."/>
        </authorList>
    </citation>
    <scope>NUCLEOTIDE SEQUENCE [LARGE SCALE GENOMIC DNA]</scope>
    <source>
        <strain>1106a</strain>
    </source>
</reference>
<proteinExistence type="inferred from homology"/>
<dbReference type="EC" id="1.3.1.98" evidence="1"/>
<dbReference type="EMBL" id="CP000572">
    <property type="protein sequence ID" value="ABN91412.1"/>
    <property type="molecule type" value="Genomic_DNA"/>
</dbReference>
<dbReference type="SMR" id="A3NS80"/>
<dbReference type="KEGG" id="bpl:BURPS1106A_0920"/>
<dbReference type="HOGENOM" id="CLU_035304_0_0_4"/>
<dbReference type="UniPathway" id="UPA00219"/>
<dbReference type="Proteomes" id="UP000006738">
    <property type="component" value="Chromosome I"/>
</dbReference>
<dbReference type="GO" id="GO:0005829">
    <property type="term" value="C:cytosol"/>
    <property type="evidence" value="ECO:0007669"/>
    <property type="project" value="TreeGrafter"/>
</dbReference>
<dbReference type="GO" id="GO:0071949">
    <property type="term" value="F:FAD binding"/>
    <property type="evidence" value="ECO:0007669"/>
    <property type="project" value="InterPro"/>
</dbReference>
<dbReference type="GO" id="GO:0008762">
    <property type="term" value="F:UDP-N-acetylmuramate dehydrogenase activity"/>
    <property type="evidence" value="ECO:0007669"/>
    <property type="project" value="UniProtKB-UniRule"/>
</dbReference>
<dbReference type="GO" id="GO:0051301">
    <property type="term" value="P:cell division"/>
    <property type="evidence" value="ECO:0007669"/>
    <property type="project" value="UniProtKB-KW"/>
</dbReference>
<dbReference type="GO" id="GO:0071555">
    <property type="term" value="P:cell wall organization"/>
    <property type="evidence" value="ECO:0007669"/>
    <property type="project" value="UniProtKB-KW"/>
</dbReference>
<dbReference type="GO" id="GO:0009252">
    <property type="term" value="P:peptidoglycan biosynthetic process"/>
    <property type="evidence" value="ECO:0007669"/>
    <property type="project" value="UniProtKB-UniRule"/>
</dbReference>
<dbReference type="GO" id="GO:0008360">
    <property type="term" value="P:regulation of cell shape"/>
    <property type="evidence" value="ECO:0007669"/>
    <property type="project" value="UniProtKB-KW"/>
</dbReference>
<dbReference type="Gene3D" id="3.30.465.10">
    <property type="match status" value="1"/>
</dbReference>
<dbReference type="Gene3D" id="3.90.78.10">
    <property type="entry name" value="UDP-N-acetylenolpyruvoylglucosamine reductase, C-terminal domain"/>
    <property type="match status" value="1"/>
</dbReference>
<dbReference type="Gene3D" id="3.30.43.10">
    <property type="entry name" value="Uridine Diphospho-n-acetylenolpyruvylglucosamine Reductase, domain 2"/>
    <property type="match status" value="1"/>
</dbReference>
<dbReference type="HAMAP" id="MF_00037">
    <property type="entry name" value="MurB"/>
    <property type="match status" value="1"/>
</dbReference>
<dbReference type="InterPro" id="IPR016166">
    <property type="entry name" value="FAD-bd_PCMH"/>
</dbReference>
<dbReference type="InterPro" id="IPR036318">
    <property type="entry name" value="FAD-bd_PCMH-like_sf"/>
</dbReference>
<dbReference type="InterPro" id="IPR016167">
    <property type="entry name" value="FAD-bd_PCMH_sub1"/>
</dbReference>
<dbReference type="InterPro" id="IPR016169">
    <property type="entry name" value="FAD-bd_PCMH_sub2"/>
</dbReference>
<dbReference type="InterPro" id="IPR003170">
    <property type="entry name" value="MurB"/>
</dbReference>
<dbReference type="InterPro" id="IPR011601">
    <property type="entry name" value="MurB_C"/>
</dbReference>
<dbReference type="InterPro" id="IPR036635">
    <property type="entry name" value="MurB_C_sf"/>
</dbReference>
<dbReference type="InterPro" id="IPR006094">
    <property type="entry name" value="Oxid_FAD_bind_N"/>
</dbReference>
<dbReference type="NCBIfam" id="TIGR00179">
    <property type="entry name" value="murB"/>
    <property type="match status" value="1"/>
</dbReference>
<dbReference type="NCBIfam" id="NF000755">
    <property type="entry name" value="PRK00046.1"/>
    <property type="match status" value="1"/>
</dbReference>
<dbReference type="PANTHER" id="PTHR21071">
    <property type="entry name" value="UDP-N-ACETYLENOLPYRUVOYLGLUCOSAMINE REDUCTASE"/>
    <property type="match status" value="1"/>
</dbReference>
<dbReference type="PANTHER" id="PTHR21071:SF4">
    <property type="entry name" value="UDP-N-ACETYLENOLPYRUVOYLGLUCOSAMINE REDUCTASE"/>
    <property type="match status" value="1"/>
</dbReference>
<dbReference type="Pfam" id="PF01565">
    <property type="entry name" value="FAD_binding_4"/>
    <property type="match status" value="1"/>
</dbReference>
<dbReference type="Pfam" id="PF02873">
    <property type="entry name" value="MurB_C"/>
    <property type="match status" value="1"/>
</dbReference>
<dbReference type="SUPFAM" id="SSF56176">
    <property type="entry name" value="FAD-binding/transporter-associated domain-like"/>
    <property type="match status" value="1"/>
</dbReference>
<dbReference type="SUPFAM" id="SSF56194">
    <property type="entry name" value="Uridine diphospho-N-Acetylenolpyruvylglucosamine reductase, MurB, C-terminal domain"/>
    <property type="match status" value="1"/>
</dbReference>
<dbReference type="PROSITE" id="PS51387">
    <property type="entry name" value="FAD_PCMH"/>
    <property type="match status" value="1"/>
</dbReference>
<evidence type="ECO:0000255" key="1">
    <source>
        <dbReference type="HAMAP-Rule" id="MF_00037"/>
    </source>
</evidence>